<sequence length="220" mass="23523">MELYLDTANVAEVERLARIFPIAGVTTNPSIIAASKESIWEVLPRLQKAIGDEGILFAQTMSRDAQGMVKEAKHLRDAIPGIVVKIPVTSEGLAAIKMLKKEGITTLGTAVYSAAQGLLAALAGAKYVAPYVNRVDAQGGDGIRTVQELQALLEMHAPESMVLAASFKTPRQALDCLLAGCESITLPLDVAQQMLNTPAVESAIEKFEHDWNAAFGTTHL</sequence>
<name>FSAB_ECOL6</name>
<comment type="function">
    <text evidence="1">Catalyzes the reversible formation of fructose 6-phosphate from dihydroxyacetone and D-glyceraldehyde 3-phosphate via an aldolization reaction.</text>
</comment>
<comment type="catalytic activity">
    <reaction>
        <text>beta-D-fructose 6-phosphate = dihydroxyacetone + D-glyceraldehyde 3-phosphate</text>
        <dbReference type="Rhea" id="RHEA:28002"/>
        <dbReference type="ChEBI" id="CHEBI:16016"/>
        <dbReference type="ChEBI" id="CHEBI:57634"/>
        <dbReference type="ChEBI" id="CHEBI:59776"/>
    </reaction>
</comment>
<comment type="subunit">
    <text evidence="1">Homodecamer.</text>
</comment>
<comment type="subcellular location">
    <subcellularLocation>
        <location evidence="1">Cytoplasm</location>
    </subcellularLocation>
</comment>
<comment type="similarity">
    <text evidence="2">Belongs to the transaldolase family. Type 3A subfamily.</text>
</comment>
<dbReference type="EC" id="4.1.2.-"/>
<dbReference type="EMBL" id="AE014075">
    <property type="protein sequence ID" value="AAN83333.1"/>
    <property type="molecule type" value="Genomic_DNA"/>
</dbReference>
<dbReference type="SMR" id="Q8FBA7"/>
<dbReference type="STRING" id="199310.c4905"/>
<dbReference type="KEGG" id="ecc:c4905"/>
<dbReference type="eggNOG" id="COG0176">
    <property type="taxonomic scope" value="Bacteria"/>
</dbReference>
<dbReference type="HOGENOM" id="CLU_079764_2_0_6"/>
<dbReference type="BioCyc" id="ECOL199310:C4905-MONOMER"/>
<dbReference type="Proteomes" id="UP000001410">
    <property type="component" value="Chromosome"/>
</dbReference>
<dbReference type="GO" id="GO:0005737">
    <property type="term" value="C:cytoplasm"/>
    <property type="evidence" value="ECO:0007669"/>
    <property type="project" value="UniProtKB-SubCell"/>
</dbReference>
<dbReference type="GO" id="GO:0097023">
    <property type="term" value="F:fructose 6-phosphate aldolase activity"/>
    <property type="evidence" value="ECO:0007669"/>
    <property type="project" value="RHEA"/>
</dbReference>
<dbReference type="GO" id="GO:0006000">
    <property type="term" value="P:fructose metabolic process"/>
    <property type="evidence" value="ECO:0007669"/>
    <property type="project" value="UniProtKB-UniRule"/>
</dbReference>
<dbReference type="CDD" id="cd00956">
    <property type="entry name" value="Transaldolase_FSA"/>
    <property type="match status" value="1"/>
</dbReference>
<dbReference type="FunFam" id="3.20.20.70:FF:000018">
    <property type="entry name" value="Probable transaldolase"/>
    <property type="match status" value="1"/>
</dbReference>
<dbReference type="Gene3D" id="3.20.20.70">
    <property type="entry name" value="Aldolase class I"/>
    <property type="match status" value="1"/>
</dbReference>
<dbReference type="HAMAP" id="MF_00496">
    <property type="entry name" value="F6P_aldolase"/>
    <property type="match status" value="1"/>
</dbReference>
<dbReference type="InterPro" id="IPR013785">
    <property type="entry name" value="Aldolase_TIM"/>
</dbReference>
<dbReference type="InterPro" id="IPR023001">
    <property type="entry name" value="F6P_aldolase"/>
</dbReference>
<dbReference type="InterPro" id="IPR001585">
    <property type="entry name" value="TAL/FSA"/>
</dbReference>
<dbReference type="InterPro" id="IPR004731">
    <property type="entry name" value="Transaldolase_3B/F6P_aldolase"/>
</dbReference>
<dbReference type="InterPro" id="IPR018225">
    <property type="entry name" value="Transaldolase_AS"/>
</dbReference>
<dbReference type="InterPro" id="IPR033919">
    <property type="entry name" value="TSA/FSA_arc/bac"/>
</dbReference>
<dbReference type="NCBIfam" id="TIGR00875">
    <property type="entry name" value="fsa_talC_mipB"/>
    <property type="match status" value="1"/>
</dbReference>
<dbReference type="NCBIfam" id="NF009296">
    <property type="entry name" value="PRK12653.1"/>
    <property type="match status" value="1"/>
</dbReference>
<dbReference type="PANTHER" id="PTHR10683:SF40">
    <property type="entry name" value="FRUCTOSE-6-PHOSPHATE ALDOLASE 1-RELATED"/>
    <property type="match status" value="1"/>
</dbReference>
<dbReference type="PANTHER" id="PTHR10683">
    <property type="entry name" value="TRANSALDOLASE"/>
    <property type="match status" value="1"/>
</dbReference>
<dbReference type="Pfam" id="PF00923">
    <property type="entry name" value="TAL_FSA"/>
    <property type="match status" value="1"/>
</dbReference>
<dbReference type="SUPFAM" id="SSF51569">
    <property type="entry name" value="Aldolase"/>
    <property type="match status" value="1"/>
</dbReference>
<dbReference type="PROSITE" id="PS01054">
    <property type="entry name" value="TRANSALDOLASE_1"/>
    <property type="match status" value="1"/>
</dbReference>
<dbReference type="PROSITE" id="PS00958">
    <property type="entry name" value="TRANSALDOLASE_2"/>
    <property type="match status" value="1"/>
</dbReference>
<protein>
    <recommendedName>
        <fullName>Fructose-6-phosphate aldolase 2</fullName>
        <ecNumber>4.1.2.-</ecNumber>
    </recommendedName>
</protein>
<keyword id="KW-0119">Carbohydrate metabolism</keyword>
<keyword id="KW-0963">Cytoplasm</keyword>
<keyword id="KW-0456">Lyase</keyword>
<keyword id="KW-1185">Reference proteome</keyword>
<keyword id="KW-0704">Schiff base</keyword>
<evidence type="ECO:0000250" key="1"/>
<evidence type="ECO:0000305" key="2"/>
<organism>
    <name type="scientific">Escherichia coli O6:H1 (strain CFT073 / ATCC 700928 / UPEC)</name>
    <dbReference type="NCBI Taxonomy" id="199310"/>
    <lineage>
        <taxon>Bacteria</taxon>
        <taxon>Pseudomonadati</taxon>
        <taxon>Pseudomonadota</taxon>
        <taxon>Gammaproteobacteria</taxon>
        <taxon>Enterobacterales</taxon>
        <taxon>Enterobacteriaceae</taxon>
        <taxon>Escherichia</taxon>
    </lineage>
</organism>
<feature type="chain" id="PRO_0000173647" description="Fructose-6-phosphate aldolase 2">
    <location>
        <begin position="1"/>
        <end position="220"/>
    </location>
</feature>
<feature type="active site" description="Schiff-base intermediate with substrate" evidence="1">
    <location>
        <position position="85"/>
    </location>
</feature>
<accession>Q8FBA7</accession>
<reference key="1">
    <citation type="journal article" date="2002" name="Proc. Natl. Acad. Sci. U.S.A.">
        <title>Extensive mosaic structure revealed by the complete genome sequence of uropathogenic Escherichia coli.</title>
        <authorList>
            <person name="Welch R.A."/>
            <person name="Burland V."/>
            <person name="Plunkett G. III"/>
            <person name="Redford P."/>
            <person name="Roesch P."/>
            <person name="Rasko D."/>
            <person name="Buckles E.L."/>
            <person name="Liou S.-R."/>
            <person name="Boutin A."/>
            <person name="Hackett J."/>
            <person name="Stroud D."/>
            <person name="Mayhew G.F."/>
            <person name="Rose D.J."/>
            <person name="Zhou S."/>
            <person name="Schwartz D.C."/>
            <person name="Perna N.T."/>
            <person name="Mobley H.L.T."/>
            <person name="Donnenberg M.S."/>
            <person name="Blattner F.R."/>
        </authorList>
    </citation>
    <scope>NUCLEOTIDE SEQUENCE [LARGE SCALE GENOMIC DNA]</scope>
    <source>
        <strain>CFT073 / ATCC 700928 / UPEC</strain>
    </source>
</reference>
<gene>
    <name type="primary">fsaB</name>
    <name type="synonym">talC</name>
    <name type="ordered locus">c4905</name>
</gene>
<proteinExistence type="inferred from homology"/>